<organism>
    <name type="scientific">Equus caballus</name>
    <name type="common">Horse</name>
    <dbReference type="NCBI Taxonomy" id="9796"/>
    <lineage>
        <taxon>Eukaryota</taxon>
        <taxon>Metazoa</taxon>
        <taxon>Chordata</taxon>
        <taxon>Craniata</taxon>
        <taxon>Vertebrata</taxon>
        <taxon>Euteleostomi</taxon>
        <taxon>Mammalia</taxon>
        <taxon>Eutheria</taxon>
        <taxon>Laurasiatheria</taxon>
        <taxon>Perissodactyla</taxon>
        <taxon>Equidae</taxon>
        <taxon>Equus</taxon>
    </lineage>
</organism>
<comment type="function">
    <text>Major acute phase reactant. Apolipoprotein of the HDL complex.</text>
</comment>
<comment type="tissue specificity">
    <text>Expressed by the liver; secreted in plasma.</text>
</comment>
<comment type="induction">
    <text>Upon cytokine stimulation.</text>
</comment>
<comment type="PTM">
    <text>This protein is the precursor of amyloid protein A, which is formed by the removal of residues from the C-terminal end.</text>
</comment>
<comment type="disease">
    <text>Reactive, secondary amyloidosis is characterized by the extracellular accumulation in various tissues of the SAA protein. These deposits are highly insoluble and resistant to proteolysis; they disrupt tissue structure and compromise function.</text>
</comment>
<comment type="similarity">
    <text evidence="2">Belongs to the SAA family.</text>
</comment>
<name>SAA_HORSE</name>
<accession>P19857</accession>
<protein>
    <recommendedName>
        <fullName>Serum amyloid A protein</fullName>
        <shortName>SAA</shortName>
    </recommendedName>
    <component>
        <recommendedName>
            <fullName>Amyloid protein A</fullName>
        </recommendedName>
        <alternativeName>
            <fullName>Amyloid fibril protein AA</fullName>
        </alternativeName>
    </component>
</protein>
<evidence type="ECO:0000256" key="1">
    <source>
        <dbReference type="SAM" id="MobiDB-lite"/>
    </source>
</evidence>
<evidence type="ECO:0000305" key="2"/>
<reference key="1">
    <citation type="journal article" date="1989" name="Scand. J. Immunol.">
        <title>The primary structure of equine serum amyloid A (SAA) protein.</title>
        <authorList>
            <person name="Sletten K."/>
            <person name="Husebekk A."/>
            <person name="Husby G."/>
        </authorList>
    </citation>
    <scope>PROTEIN SEQUENCE</scope>
    <source>
        <tissue>Blood</tissue>
    </source>
</reference>
<reference key="2">
    <citation type="journal article" date="1987" name="Scand. J. Immunol.">
        <title>The amino acid sequence of an amyloid fibril protein AA isolated from the horse.</title>
        <authorList>
            <person name="Sletten K."/>
            <person name="Husebekk A."/>
            <person name="Husby G."/>
        </authorList>
    </citation>
    <scope>PROTEIN SEQUENCE OF 1-80</scope>
    <source>
        <tissue>Liver</tissue>
    </source>
</reference>
<dbReference type="PIR" id="A60430">
    <property type="entry name" value="A28573"/>
</dbReference>
<dbReference type="SMR" id="P19857"/>
<dbReference type="FunCoup" id="P19857">
    <property type="interactions" value="22"/>
</dbReference>
<dbReference type="STRING" id="9796.ENSECAP00000011472"/>
<dbReference type="PaxDb" id="9796-ENSECAP00000011472"/>
<dbReference type="PeptideAtlas" id="P19857"/>
<dbReference type="InParanoid" id="P19857"/>
<dbReference type="Proteomes" id="UP000002281">
    <property type="component" value="Unplaced"/>
</dbReference>
<dbReference type="GO" id="GO:0034364">
    <property type="term" value="C:high-density lipoprotein particle"/>
    <property type="evidence" value="ECO:0007669"/>
    <property type="project" value="UniProtKB-KW"/>
</dbReference>
<dbReference type="GO" id="GO:0006953">
    <property type="term" value="P:acute-phase response"/>
    <property type="evidence" value="ECO:0007669"/>
    <property type="project" value="UniProtKB-KW"/>
</dbReference>
<dbReference type="FunFam" id="1.10.132.110:FF:000001">
    <property type="entry name" value="Serum amyloid A protein"/>
    <property type="match status" value="1"/>
</dbReference>
<dbReference type="Gene3D" id="1.10.132.110">
    <property type="entry name" value="Serum amyloid A protein"/>
    <property type="match status" value="1"/>
</dbReference>
<dbReference type="InterPro" id="IPR000096">
    <property type="entry name" value="Serum_amyloid_A"/>
</dbReference>
<dbReference type="InterPro" id="IPR052464">
    <property type="entry name" value="Synovial_Prolif_Regulator"/>
</dbReference>
<dbReference type="PANTHER" id="PTHR23424">
    <property type="entry name" value="SERUM AMYLOID A"/>
    <property type="match status" value="1"/>
</dbReference>
<dbReference type="PANTHER" id="PTHR23424:SF29">
    <property type="entry name" value="SERUM AMYLOID A PROTEIN"/>
    <property type="match status" value="1"/>
</dbReference>
<dbReference type="Pfam" id="PF00277">
    <property type="entry name" value="SAA"/>
    <property type="match status" value="1"/>
</dbReference>
<dbReference type="PIRSF" id="PIRSF002472">
    <property type="entry name" value="Serum_amyloid_A"/>
    <property type="match status" value="1"/>
</dbReference>
<dbReference type="PRINTS" id="PR00306">
    <property type="entry name" value="SERUMAMYLOID"/>
</dbReference>
<dbReference type="SMART" id="SM00197">
    <property type="entry name" value="SAA"/>
    <property type="match status" value="1"/>
</dbReference>
<dbReference type="PROSITE" id="PS00992">
    <property type="entry name" value="SAA"/>
    <property type="match status" value="1"/>
</dbReference>
<sequence>LLSFLGEAARGTWDMIRAYNDMREANYIGADKYFHARGNYDAAKRGPGGAWAAKVISDARENFQRFTDRFSFGGSGRGAEDSRADQAANEWGRSGKDPNHFRPHGLPDKY</sequence>
<feature type="chain" id="PRO_0000031573" description="Serum amyloid A protein">
    <location>
        <begin position="1"/>
        <end position="110"/>
    </location>
</feature>
<feature type="chain" id="PRO_0000031574" description="Amyloid protein A">
    <location>
        <begin position="1"/>
        <end position="80"/>
    </location>
</feature>
<feature type="region of interest" description="Disordered" evidence="1">
    <location>
        <begin position="73"/>
        <end position="110"/>
    </location>
</feature>
<feature type="compositionally biased region" description="Basic and acidic residues" evidence="1">
    <location>
        <begin position="93"/>
        <end position="110"/>
    </location>
</feature>
<feature type="sequence variant">
    <original>I</original>
    <variation>L</variation>
    <location>
        <position position="16"/>
    </location>
</feature>
<feature type="sequence variant">
    <original>K</original>
    <variation>Q</variation>
    <location>
        <position position="44"/>
    </location>
</feature>
<feature type="sequence variant">
    <original>A</original>
    <variation>G</variation>
    <location>
        <position position="59"/>
    </location>
</feature>
<feature type="sequence variant">
    <original>G</original>
    <variation>A</variation>
    <location>
        <position position="78"/>
    </location>
</feature>
<keyword id="KW-0011">Acute phase</keyword>
<keyword id="KW-0034">Amyloid</keyword>
<keyword id="KW-0903">Direct protein sequencing</keyword>
<keyword id="KW-0345">HDL</keyword>
<keyword id="KW-1185">Reference proteome</keyword>
<gene>
    <name type="primary">SAA1</name>
</gene>
<proteinExistence type="evidence at protein level"/>